<proteinExistence type="inferred from homology"/>
<protein>
    <recommendedName>
        <fullName evidence="1">UPF0336 protein Franean1_6066</fullName>
    </recommendedName>
</protein>
<dbReference type="EMBL" id="CP000820">
    <property type="protein sequence ID" value="ABW15410.1"/>
    <property type="molecule type" value="Genomic_DNA"/>
</dbReference>
<dbReference type="RefSeq" id="WP_020463492.1">
    <property type="nucleotide sequence ID" value="NC_009921.1"/>
</dbReference>
<dbReference type="SMR" id="A8LC73"/>
<dbReference type="STRING" id="298653.Franean1_6066"/>
<dbReference type="KEGG" id="fre:Franean1_6066"/>
<dbReference type="eggNOG" id="COG2030">
    <property type="taxonomic scope" value="Bacteria"/>
</dbReference>
<dbReference type="HOGENOM" id="CLU_116276_0_0_11"/>
<dbReference type="GO" id="GO:0019171">
    <property type="term" value="F:(3R)-hydroxyacyl-[acyl-carrier-protein] dehydratase activity"/>
    <property type="evidence" value="ECO:0007669"/>
    <property type="project" value="TreeGrafter"/>
</dbReference>
<dbReference type="GO" id="GO:0006633">
    <property type="term" value="P:fatty acid biosynthetic process"/>
    <property type="evidence" value="ECO:0007669"/>
    <property type="project" value="TreeGrafter"/>
</dbReference>
<dbReference type="CDD" id="cd03441">
    <property type="entry name" value="R_hydratase_like"/>
    <property type="match status" value="1"/>
</dbReference>
<dbReference type="Gene3D" id="3.10.129.10">
    <property type="entry name" value="Hotdog Thioesterase"/>
    <property type="match status" value="1"/>
</dbReference>
<dbReference type="HAMAP" id="MF_00799">
    <property type="entry name" value="UPF0336"/>
    <property type="match status" value="1"/>
</dbReference>
<dbReference type="InterPro" id="IPR039569">
    <property type="entry name" value="FAS1-like_DH_region"/>
</dbReference>
<dbReference type="InterPro" id="IPR016709">
    <property type="entry name" value="HadA-like"/>
</dbReference>
<dbReference type="InterPro" id="IPR029069">
    <property type="entry name" value="HotDog_dom_sf"/>
</dbReference>
<dbReference type="InterPro" id="IPR050965">
    <property type="entry name" value="UPF0336/Enoyl-CoA_hydratase"/>
</dbReference>
<dbReference type="PANTHER" id="PTHR43437:SF3">
    <property type="entry name" value="HYDROXYACYL-THIOESTER DEHYDRATASE TYPE 2, MITOCHONDRIAL"/>
    <property type="match status" value="1"/>
</dbReference>
<dbReference type="PANTHER" id="PTHR43437">
    <property type="entry name" value="HYDROXYACYL-THIOESTER DEHYDRATASE TYPE 2, MITOCHONDRIAL-RELATED"/>
    <property type="match status" value="1"/>
</dbReference>
<dbReference type="Pfam" id="PF13452">
    <property type="entry name" value="FAS1_DH_region"/>
    <property type="match status" value="1"/>
</dbReference>
<dbReference type="PIRSF" id="PIRSF018072">
    <property type="entry name" value="UCP018072"/>
    <property type="match status" value="1"/>
</dbReference>
<dbReference type="SUPFAM" id="SSF54637">
    <property type="entry name" value="Thioesterase/thiol ester dehydrase-isomerase"/>
    <property type="match status" value="1"/>
</dbReference>
<gene>
    <name type="ordered locus">Franean1_6066</name>
</gene>
<comment type="similarity">
    <text evidence="1">Belongs to the UPF0336 family.</text>
</comment>
<evidence type="ECO:0000255" key="1">
    <source>
        <dbReference type="HAMAP-Rule" id="MF_00799"/>
    </source>
</evidence>
<name>Y6066_PARS2</name>
<sequence>MPLNQDFVGRSYTSDVPFQVGREHIRQFARAIGDGNPLFRDVEAAKAAGHADLVAPPTFLVTAIPGDLGLPTNDPALGLDYSLVVHGDQRFTLHRPVVAGDELVVRSTLASIRSVGRNEVLVTSYEFTTTSGELVAEGTCSLVSRGTAPPR</sequence>
<organism>
    <name type="scientific">Parafrankia sp. (strain EAN1pec)</name>
    <dbReference type="NCBI Taxonomy" id="298653"/>
    <lineage>
        <taxon>Bacteria</taxon>
        <taxon>Bacillati</taxon>
        <taxon>Actinomycetota</taxon>
        <taxon>Actinomycetes</taxon>
        <taxon>Frankiales</taxon>
        <taxon>Frankiaceae</taxon>
        <taxon>Parafrankia</taxon>
    </lineage>
</organism>
<reference key="1">
    <citation type="journal article" date="2007" name="Genome Res.">
        <title>Genome characteristics of facultatively symbiotic Frankia sp. strains reflect host range and host plant biogeography.</title>
        <authorList>
            <person name="Normand P."/>
            <person name="Lapierre P."/>
            <person name="Tisa L.S."/>
            <person name="Gogarten J.P."/>
            <person name="Alloisio N."/>
            <person name="Bagnarol E."/>
            <person name="Bassi C.A."/>
            <person name="Berry A.M."/>
            <person name="Bickhart D.M."/>
            <person name="Choisne N."/>
            <person name="Couloux A."/>
            <person name="Cournoyer B."/>
            <person name="Cruveiller S."/>
            <person name="Daubin V."/>
            <person name="Demange N."/>
            <person name="Francino M.P."/>
            <person name="Goltsman E."/>
            <person name="Huang Y."/>
            <person name="Kopp O.R."/>
            <person name="Labarre L."/>
            <person name="Lapidus A."/>
            <person name="Lavire C."/>
            <person name="Marechal J."/>
            <person name="Martinez M."/>
            <person name="Mastronunzio J.E."/>
            <person name="Mullin B.C."/>
            <person name="Niemann J."/>
            <person name="Pujic P."/>
            <person name="Rawnsley T."/>
            <person name="Rouy Z."/>
            <person name="Schenowitz C."/>
            <person name="Sellstedt A."/>
            <person name="Tavares F."/>
            <person name="Tomkins J.P."/>
            <person name="Vallenet D."/>
            <person name="Valverde C."/>
            <person name="Wall L.G."/>
            <person name="Wang Y."/>
            <person name="Medigue C."/>
            <person name="Benson D.R."/>
        </authorList>
    </citation>
    <scope>NUCLEOTIDE SEQUENCE [LARGE SCALE GENOMIC DNA]</scope>
    <source>
        <strain>EAN1pec</strain>
    </source>
</reference>
<accession>A8LC73</accession>
<feature type="chain" id="PRO_1000200699" description="UPF0336 protein Franean1_6066">
    <location>
        <begin position="1"/>
        <end position="151"/>
    </location>
</feature>
<feature type="domain" description="MaoC-like">
    <location>
        <begin position="8"/>
        <end position="127"/>
    </location>
</feature>